<gene>
    <name type="ORF">CG5532</name>
</gene>
<feature type="chain" id="PRO_0000221176" description="Transmembrane protein 14 homolog">
    <location>
        <begin position="1"/>
        <end position="112"/>
    </location>
</feature>
<feature type="transmembrane region" description="Helical" evidence="1">
    <location>
        <begin position="3"/>
        <end position="23"/>
    </location>
</feature>
<sequence>MPVDWFGYVYAATVAAGGIMGYAKAGSIPSLGAGLAFGALLGYGAHLNSQDTPRPLLQLGTSLFLAGLMGARWNRSGKLMPAGMVCMLSVAALVKNLATYNRYLMPAGTKAP</sequence>
<protein>
    <recommendedName>
        <fullName>Transmembrane protein 14 homolog</fullName>
    </recommendedName>
</protein>
<name>TM14_DROME</name>
<evidence type="ECO:0000255" key="1"/>
<evidence type="ECO:0000305" key="2"/>
<accession>Q9W1K0</accession>
<organism>
    <name type="scientific">Drosophila melanogaster</name>
    <name type="common">Fruit fly</name>
    <dbReference type="NCBI Taxonomy" id="7227"/>
    <lineage>
        <taxon>Eukaryota</taxon>
        <taxon>Metazoa</taxon>
        <taxon>Ecdysozoa</taxon>
        <taxon>Arthropoda</taxon>
        <taxon>Hexapoda</taxon>
        <taxon>Insecta</taxon>
        <taxon>Pterygota</taxon>
        <taxon>Neoptera</taxon>
        <taxon>Endopterygota</taxon>
        <taxon>Diptera</taxon>
        <taxon>Brachycera</taxon>
        <taxon>Muscomorpha</taxon>
        <taxon>Ephydroidea</taxon>
        <taxon>Drosophilidae</taxon>
        <taxon>Drosophila</taxon>
        <taxon>Sophophora</taxon>
    </lineage>
</organism>
<reference key="1">
    <citation type="journal article" date="2000" name="Science">
        <title>The genome sequence of Drosophila melanogaster.</title>
        <authorList>
            <person name="Adams M.D."/>
            <person name="Celniker S.E."/>
            <person name="Holt R.A."/>
            <person name="Evans C.A."/>
            <person name="Gocayne J.D."/>
            <person name="Amanatides P.G."/>
            <person name="Scherer S.E."/>
            <person name="Li P.W."/>
            <person name="Hoskins R.A."/>
            <person name="Galle R.F."/>
            <person name="George R.A."/>
            <person name="Lewis S.E."/>
            <person name="Richards S."/>
            <person name="Ashburner M."/>
            <person name="Henderson S.N."/>
            <person name="Sutton G.G."/>
            <person name="Wortman J.R."/>
            <person name="Yandell M.D."/>
            <person name="Zhang Q."/>
            <person name="Chen L.X."/>
            <person name="Brandon R.C."/>
            <person name="Rogers Y.-H.C."/>
            <person name="Blazej R.G."/>
            <person name="Champe M."/>
            <person name="Pfeiffer B.D."/>
            <person name="Wan K.H."/>
            <person name="Doyle C."/>
            <person name="Baxter E.G."/>
            <person name="Helt G."/>
            <person name="Nelson C.R."/>
            <person name="Miklos G.L.G."/>
            <person name="Abril J.F."/>
            <person name="Agbayani A."/>
            <person name="An H.-J."/>
            <person name="Andrews-Pfannkoch C."/>
            <person name="Baldwin D."/>
            <person name="Ballew R.M."/>
            <person name="Basu A."/>
            <person name="Baxendale J."/>
            <person name="Bayraktaroglu L."/>
            <person name="Beasley E.M."/>
            <person name="Beeson K.Y."/>
            <person name="Benos P.V."/>
            <person name="Berman B.P."/>
            <person name="Bhandari D."/>
            <person name="Bolshakov S."/>
            <person name="Borkova D."/>
            <person name="Botchan M.R."/>
            <person name="Bouck J."/>
            <person name="Brokstein P."/>
            <person name="Brottier P."/>
            <person name="Burtis K.C."/>
            <person name="Busam D.A."/>
            <person name="Butler H."/>
            <person name="Cadieu E."/>
            <person name="Center A."/>
            <person name="Chandra I."/>
            <person name="Cherry J.M."/>
            <person name="Cawley S."/>
            <person name="Dahlke C."/>
            <person name="Davenport L.B."/>
            <person name="Davies P."/>
            <person name="de Pablos B."/>
            <person name="Delcher A."/>
            <person name="Deng Z."/>
            <person name="Mays A.D."/>
            <person name="Dew I."/>
            <person name="Dietz S.M."/>
            <person name="Dodson K."/>
            <person name="Doup L.E."/>
            <person name="Downes M."/>
            <person name="Dugan-Rocha S."/>
            <person name="Dunkov B.C."/>
            <person name="Dunn P."/>
            <person name="Durbin K.J."/>
            <person name="Evangelista C.C."/>
            <person name="Ferraz C."/>
            <person name="Ferriera S."/>
            <person name="Fleischmann W."/>
            <person name="Fosler C."/>
            <person name="Gabrielian A.E."/>
            <person name="Garg N.S."/>
            <person name="Gelbart W.M."/>
            <person name="Glasser K."/>
            <person name="Glodek A."/>
            <person name="Gong F."/>
            <person name="Gorrell J.H."/>
            <person name="Gu Z."/>
            <person name="Guan P."/>
            <person name="Harris M."/>
            <person name="Harris N.L."/>
            <person name="Harvey D.A."/>
            <person name="Heiman T.J."/>
            <person name="Hernandez J.R."/>
            <person name="Houck J."/>
            <person name="Hostin D."/>
            <person name="Houston K.A."/>
            <person name="Howland T.J."/>
            <person name="Wei M.-H."/>
            <person name="Ibegwam C."/>
            <person name="Jalali M."/>
            <person name="Kalush F."/>
            <person name="Karpen G.H."/>
            <person name="Ke Z."/>
            <person name="Kennison J.A."/>
            <person name="Ketchum K.A."/>
            <person name="Kimmel B.E."/>
            <person name="Kodira C.D."/>
            <person name="Kraft C.L."/>
            <person name="Kravitz S."/>
            <person name="Kulp D."/>
            <person name="Lai Z."/>
            <person name="Lasko P."/>
            <person name="Lei Y."/>
            <person name="Levitsky A.A."/>
            <person name="Li J.H."/>
            <person name="Li Z."/>
            <person name="Liang Y."/>
            <person name="Lin X."/>
            <person name="Liu X."/>
            <person name="Mattei B."/>
            <person name="McIntosh T.C."/>
            <person name="McLeod M.P."/>
            <person name="McPherson D."/>
            <person name="Merkulov G."/>
            <person name="Milshina N.V."/>
            <person name="Mobarry C."/>
            <person name="Morris J."/>
            <person name="Moshrefi A."/>
            <person name="Mount S.M."/>
            <person name="Moy M."/>
            <person name="Murphy B."/>
            <person name="Murphy L."/>
            <person name="Muzny D.M."/>
            <person name="Nelson D.L."/>
            <person name="Nelson D.R."/>
            <person name="Nelson K.A."/>
            <person name="Nixon K."/>
            <person name="Nusskern D.R."/>
            <person name="Pacleb J.M."/>
            <person name="Palazzolo M."/>
            <person name="Pittman G.S."/>
            <person name="Pan S."/>
            <person name="Pollard J."/>
            <person name="Puri V."/>
            <person name="Reese M.G."/>
            <person name="Reinert K."/>
            <person name="Remington K."/>
            <person name="Saunders R.D.C."/>
            <person name="Scheeler F."/>
            <person name="Shen H."/>
            <person name="Shue B.C."/>
            <person name="Siden-Kiamos I."/>
            <person name="Simpson M."/>
            <person name="Skupski M.P."/>
            <person name="Smith T.J."/>
            <person name="Spier E."/>
            <person name="Spradling A.C."/>
            <person name="Stapleton M."/>
            <person name="Strong R."/>
            <person name="Sun E."/>
            <person name="Svirskas R."/>
            <person name="Tector C."/>
            <person name="Turner R."/>
            <person name="Venter E."/>
            <person name="Wang A.H."/>
            <person name="Wang X."/>
            <person name="Wang Z.-Y."/>
            <person name="Wassarman D.A."/>
            <person name="Weinstock G.M."/>
            <person name="Weissenbach J."/>
            <person name="Williams S.M."/>
            <person name="Woodage T."/>
            <person name="Worley K.C."/>
            <person name="Wu D."/>
            <person name="Yang S."/>
            <person name="Yao Q.A."/>
            <person name="Ye J."/>
            <person name="Yeh R.-F."/>
            <person name="Zaveri J.S."/>
            <person name="Zhan M."/>
            <person name="Zhang G."/>
            <person name="Zhao Q."/>
            <person name="Zheng L."/>
            <person name="Zheng X.H."/>
            <person name="Zhong F.N."/>
            <person name="Zhong W."/>
            <person name="Zhou X."/>
            <person name="Zhu S.C."/>
            <person name="Zhu X."/>
            <person name="Smith H.O."/>
            <person name="Gibbs R.A."/>
            <person name="Myers E.W."/>
            <person name="Rubin G.M."/>
            <person name="Venter J.C."/>
        </authorList>
    </citation>
    <scope>NUCLEOTIDE SEQUENCE [LARGE SCALE GENOMIC DNA]</scope>
    <source>
        <strain>Berkeley</strain>
    </source>
</reference>
<reference key="2">
    <citation type="journal article" date="2002" name="Genome Biol.">
        <title>Annotation of the Drosophila melanogaster euchromatic genome: a systematic review.</title>
        <authorList>
            <person name="Misra S."/>
            <person name="Crosby M.A."/>
            <person name="Mungall C.J."/>
            <person name="Matthews B.B."/>
            <person name="Campbell K.S."/>
            <person name="Hradecky P."/>
            <person name="Huang Y."/>
            <person name="Kaminker J.S."/>
            <person name="Millburn G.H."/>
            <person name="Prochnik S.E."/>
            <person name="Smith C.D."/>
            <person name="Tupy J.L."/>
            <person name="Whitfield E.J."/>
            <person name="Bayraktaroglu L."/>
            <person name="Berman B.P."/>
            <person name="Bettencourt B.R."/>
            <person name="Celniker S.E."/>
            <person name="de Grey A.D.N.J."/>
            <person name="Drysdale R.A."/>
            <person name="Harris N.L."/>
            <person name="Richter J."/>
            <person name="Russo S."/>
            <person name="Schroeder A.J."/>
            <person name="Shu S.Q."/>
            <person name="Stapleton M."/>
            <person name="Yamada C."/>
            <person name="Ashburner M."/>
            <person name="Gelbart W.M."/>
            <person name="Rubin G.M."/>
            <person name="Lewis S.E."/>
        </authorList>
    </citation>
    <scope>GENOME REANNOTATION</scope>
    <source>
        <strain>Berkeley</strain>
    </source>
</reference>
<reference key="3">
    <citation type="journal article" date="2002" name="Genome Biol.">
        <title>A Drosophila full-length cDNA resource.</title>
        <authorList>
            <person name="Stapleton M."/>
            <person name="Carlson J.W."/>
            <person name="Brokstein P."/>
            <person name="Yu C."/>
            <person name="Champe M."/>
            <person name="George R.A."/>
            <person name="Guarin H."/>
            <person name="Kronmiller B."/>
            <person name="Pacleb J.M."/>
            <person name="Park S."/>
            <person name="Wan K.H."/>
            <person name="Rubin G.M."/>
            <person name="Celniker S.E."/>
        </authorList>
    </citation>
    <scope>NUCLEOTIDE SEQUENCE [LARGE SCALE MRNA]</scope>
    <source>
        <strain>Berkeley</strain>
        <tissue>Ovary</tissue>
    </source>
</reference>
<proteinExistence type="inferred from homology"/>
<comment type="subcellular location">
    <subcellularLocation>
        <location evidence="2">Membrane</location>
        <topology evidence="2">Single-pass membrane protein</topology>
    </subcellularLocation>
</comment>
<comment type="similarity">
    <text evidence="2">Belongs to the TMEM14 family.</text>
</comment>
<dbReference type="EMBL" id="AE013599">
    <property type="protein sequence ID" value="AAF47058.1"/>
    <property type="molecule type" value="Genomic_DNA"/>
</dbReference>
<dbReference type="EMBL" id="AY060885">
    <property type="protein sequence ID" value="AAL28433.1"/>
    <property type="molecule type" value="mRNA"/>
</dbReference>
<dbReference type="RefSeq" id="NP_001286781.1">
    <property type="nucleotide sequence ID" value="NM_001299852.1"/>
</dbReference>
<dbReference type="RefSeq" id="NP_611826.1">
    <property type="nucleotide sequence ID" value="NM_137982.4"/>
</dbReference>
<dbReference type="SMR" id="Q9W1K0"/>
<dbReference type="BioGRID" id="63357">
    <property type="interactions" value="17"/>
</dbReference>
<dbReference type="DIP" id="DIP-21739N"/>
<dbReference type="FunCoup" id="Q9W1K0">
    <property type="interactions" value="701"/>
</dbReference>
<dbReference type="IntAct" id="Q9W1K0">
    <property type="interactions" value="15"/>
</dbReference>
<dbReference type="STRING" id="7227.FBpp0311636"/>
<dbReference type="PaxDb" id="7227-FBpp0072000"/>
<dbReference type="DNASU" id="37761"/>
<dbReference type="EnsemblMetazoa" id="FBtr0072091">
    <property type="protein sequence ID" value="FBpp0072000"/>
    <property type="gene ID" value="FBgn0034902"/>
</dbReference>
<dbReference type="EnsemblMetazoa" id="FBtr0345535">
    <property type="protein sequence ID" value="FBpp0311636"/>
    <property type="gene ID" value="FBgn0034902"/>
</dbReference>
<dbReference type="GeneID" id="37761"/>
<dbReference type="KEGG" id="dme:Dmel_CG5532"/>
<dbReference type="UCSC" id="CG5532-RA">
    <property type="organism name" value="d. melanogaster"/>
</dbReference>
<dbReference type="AGR" id="FB:FBgn0034902"/>
<dbReference type="FlyBase" id="FBgn0034902">
    <property type="gene designation" value="CG5532"/>
</dbReference>
<dbReference type="VEuPathDB" id="VectorBase:FBgn0034902"/>
<dbReference type="eggNOG" id="KOG4267">
    <property type="taxonomic scope" value="Eukaryota"/>
</dbReference>
<dbReference type="GeneTree" id="ENSGT00940000154772"/>
<dbReference type="HOGENOM" id="CLU_096652_4_0_1"/>
<dbReference type="InParanoid" id="Q9W1K0"/>
<dbReference type="OMA" id="ANSHKIM"/>
<dbReference type="OrthoDB" id="5620at2759"/>
<dbReference type="PhylomeDB" id="Q9W1K0"/>
<dbReference type="BioGRID-ORCS" id="37761">
    <property type="hits" value="0 hits in 3 CRISPR screens"/>
</dbReference>
<dbReference type="GenomeRNAi" id="37761"/>
<dbReference type="PRO" id="PR:Q9W1K0"/>
<dbReference type="Proteomes" id="UP000000803">
    <property type="component" value="Chromosome 2R"/>
</dbReference>
<dbReference type="Bgee" id="FBgn0034902">
    <property type="expression patterns" value="Expressed in adult posterior midgut class II enteroendocrine cell in adult midgut (Drosophila) and 219 other cell types or tissues"/>
</dbReference>
<dbReference type="ExpressionAtlas" id="Q9W1K0">
    <property type="expression patterns" value="baseline and differential"/>
</dbReference>
<dbReference type="GO" id="GO:0005743">
    <property type="term" value="C:mitochondrial inner membrane"/>
    <property type="evidence" value="ECO:0000250"/>
    <property type="project" value="FlyBase"/>
</dbReference>
<dbReference type="GO" id="GO:0031966">
    <property type="term" value="C:mitochondrial membrane"/>
    <property type="evidence" value="ECO:0000318"/>
    <property type="project" value="GO_Central"/>
</dbReference>
<dbReference type="GO" id="GO:0022857">
    <property type="term" value="F:transmembrane transporter activity"/>
    <property type="evidence" value="ECO:0000250"/>
    <property type="project" value="FlyBase"/>
</dbReference>
<dbReference type="GO" id="GO:0070453">
    <property type="term" value="P:regulation of heme biosynthetic process"/>
    <property type="evidence" value="ECO:0000250"/>
    <property type="project" value="FlyBase"/>
</dbReference>
<dbReference type="Gene3D" id="1.10.10.1740">
    <property type="entry name" value="Transmembrane protein 14-like"/>
    <property type="match status" value="1"/>
</dbReference>
<dbReference type="InterPro" id="IPR005349">
    <property type="entry name" value="TMEM14"/>
</dbReference>
<dbReference type="InterPro" id="IPR044890">
    <property type="entry name" value="TMEM14_sf"/>
</dbReference>
<dbReference type="PANTHER" id="PTHR12668:SF43">
    <property type="entry name" value="TRANSMEMBRANE PROTEIN 14 HOMOLOG"/>
    <property type="match status" value="1"/>
</dbReference>
<dbReference type="PANTHER" id="PTHR12668">
    <property type="entry name" value="TRANSMEMBRANE PROTEIN 14, 15"/>
    <property type="match status" value="1"/>
</dbReference>
<dbReference type="Pfam" id="PF03647">
    <property type="entry name" value="Tmemb_14"/>
    <property type="match status" value="1"/>
</dbReference>
<keyword id="KW-0472">Membrane</keyword>
<keyword id="KW-1185">Reference proteome</keyword>
<keyword id="KW-0812">Transmembrane</keyword>
<keyword id="KW-1133">Transmembrane helix</keyword>